<comment type="function">
    <text evidence="1">Enhances intestinal motility in rats. Increases serum levels of phosphorus and magnesium ions. Has no detrimental effect on liver tissue or the mucosa of the small intestine. Has no hemolytic activity.</text>
</comment>
<comment type="mass spectrometry"/>
<accession>P86708</accession>
<reference evidence="3" key="1">
    <citation type="journal article" date="2010" name="Peptides">
        <title>Identification of E. dysenterica laxative peptide: A novel strategy in the treatment of chronic constipation and irritable bowel syndrome.</title>
        <authorList>
            <person name="Lima T.B."/>
            <person name="Silva O.N."/>
            <person name="Oliveira J.T."/>
            <person name="Vasconcelos I.M."/>
            <person name="Scalabrin F.B."/>
            <person name="Rocha T.L."/>
            <person name="Grossi-de-Sa M.F."/>
            <person name="Silva L.P."/>
            <person name="Guadagnin R.V."/>
            <person name="Quirino B.F."/>
            <person name="Castro C.F."/>
            <person name="Leonardecz E."/>
            <person name="Franco O.L."/>
        </authorList>
    </citation>
    <scope>PROTEIN SEQUENCE</scope>
    <scope>FUNCTION</scope>
    <scope>MASS SPECTROMETRY</scope>
    <source>
        <tissue evidence="1">Fruit flesh</tissue>
    </source>
</reference>
<feature type="peptide" id="PRO_0000399054" description="Laxative peptide" evidence="1">
    <location>
        <begin position="1"/>
        <end position="15" status="greater than"/>
    </location>
</feature>
<feature type="non-terminal residue" evidence="2">
    <location>
        <position position="15"/>
    </location>
</feature>
<name>LAXP_EUGDY</name>
<proteinExistence type="evidence at protein level"/>
<keyword id="KW-0903">Direct protein sequencing</keyword>
<sequence>DPMPAEDIVDLAYES</sequence>
<protein>
    <recommendedName>
        <fullName evidence="2">Laxative peptide</fullName>
    </recommendedName>
</protein>
<organism>
    <name type="scientific">Eugenia dysenterica</name>
    <name type="common">Cagaita tree</name>
    <dbReference type="NCBI Taxonomy" id="866613"/>
    <lineage>
        <taxon>Eukaryota</taxon>
        <taxon>Viridiplantae</taxon>
        <taxon>Streptophyta</taxon>
        <taxon>Embryophyta</taxon>
        <taxon>Tracheophyta</taxon>
        <taxon>Spermatophyta</taxon>
        <taxon>Magnoliopsida</taxon>
        <taxon>eudicotyledons</taxon>
        <taxon>Gunneridae</taxon>
        <taxon>Pentapetalae</taxon>
        <taxon>rosids</taxon>
        <taxon>malvids</taxon>
        <taxon>Myrtales</taxon>
        <taxon>Myrtaceae</taxon>
        <taxon>Myrtoideae</taxon>
        <taxon>Myrteae</taxon>
        <taxon>Eugenia group</taxon>
        <taxon>Eugenia</taxon>
    </lineage>
</organism>
<evidence type="ECO:0000269" key="1">
    <source>
    </source>
</evidence>
<evidence type="ECO:0000303" key="2">
    <source>
    </source>
</evidence>
<evidence type="ECO:0000305" key="3"/>